<keyword id="KW-0030">Aminoacyl-tRNA synthetase</keyword>
<keyword id="KW-0067">ATP-binding</keyword>
<keyword id="KW-0963">Cytoplasm</keyword>
<keyword id="KW-0436">Ligase</keyword>
<keyword id="KW-0479">Metal-binding</keyword>
<keyword id="KW-0547">Nucleotide-binding</keyword>
<keyword id="KW-0648">Protein biosynthesis</keyword>
<keyword id="KW-1185">Reference proteome</keyword>
<keyword id="KW-0694">RNA-binding</keyword>
<keyword id="KW-0820">tRNA-binding</keyword>
<keyword id="KW-0862">Zinc</keyword>
<reference key="1">
    <citation type="journal article" date="2002" name="Proc. Natl. Acad. Sci. U.S.A.">
        <title>Genome sequence of the hyperthermophilic crenarchaeon Pyrobaculum aerophilum.</title>
        <authorList>
            <person name="Fitz-Gibbon S.T."/>
            <person name="Ladner H."/>
            <person name="Kim U.-J."/>
            <person name="Stetter K.O."/>
            <person name="Simon M.I."/>
            <person name="Miller J.H."/>
        </authorList>
    </citation>
    <scope>NUCLEOTIDE SEQUENCE [LARGE SCALE GENOMIC DNA]</scope>
    <source>
        <strain>ATCC 51768 / DSM 7523 / JCM 9630 / CIP 104966 / NBRC 100827 / IM2</strain>
    </source>
</reference>
<evidence type="ECO:0000255" key="1">
    <source>
        <dbReference type="HAMAP-Rule" id="MF_00184"/>
    </source>
</evidence>
<name>SYT_PYRAE</name>
<gene>
    <name evidence="1" type="primary">thrS</name>
    <name type="ordered locus">PAE1748</name>
</gene>
<accession>Q8ZWK4</accession>
<protein>
    <recommendedName>
        <fullName evidence="1">Threonine--tRNA ligase</fullName>
        <ecNumber evidence="1">6.1.1.3</ecNumber>
    </recommendedName>
    <alternativeName>
        <fullName evidence="1">Threonyl-tRNA synthetase</fullName>
        <shortName evidence="1">ThrRS</shortName>
    </alternativeName>
</protein>
<sequence length="608" mass="70483">MRVLYIHAERFNWEPRDPALDIRDEPTSGNANNALVVFTSVERGDVPDENFLRAVASDIIDVAKKVKASAIVIYPYAHLSSDLARPYTAREVLNKLFEVVKSQFNGEVLKAPFGYYKAFEIKCLGHPLSELSRSFKPEEGRADRRAEERRDYYVIITPNGEEHDPAKFNYANYGDLKALVEKEVFRKELGGGEPKYLEYLRKFGFEWEPMSDAGHMRYAPEATVMMELVEDYSYIVAKSLGIPVFKIRGTNMFKLSEKAIESHARLFGERLYIVESDTDLILRYAACFQQFAMAKDWVISYKHLPFGMLEIADSYRHEQPGETVLLFRLRRFYMPDLHIFTKDLKEAMEVTYKLHEVIFREIGKLGRTYVSLYNVTEGFYKNHRDYLVELARREGKPILVRVLPGQKYYWVLNVEFHIVDELGRPREIATFQIDVGNAQRFGIKYVDENNQIKYPVIIHTAILGSVERYLYAVFDTMAKMEKEGKVPRLPTWLSPVQVRVIPVSKENLKYAISIADVLEAEGIRVDIDDREETLSKKIRDAETSWIPYIVVVGSKEEAEGVIAVRERGGGQYKIRLEELVKKLKDETRGYPQRPLYLPRLLSQRPSRF</sequence>
<proteinExistence type="inferred from homology"/>
<organism>
    <name type="scientific">Pyrobaculum aerophilum (strain ATCC 51768 / DSM 7523 / JCM 9630 / CIP 104966 / NBRC 100827 / IM2)</name>
    <dbReference type="NCBI Taxonomy" id="178306"/>
    <lineage>
        <taxon>Archaea</taxon>
        <taxon>Thermoproteota</taxon>
        <taxon>Thermoprotei</taxon>
        <taxon>Thermoproteales</taxon>
        <taxon>Thermoproteaceae</taxon>
        <taxon>Pyrobaculum</taxon>
    </lineage>
</organism>
<dbReference type="EC" id="6.1.1.3" evidence="1"/>
<dbReference type="EMBL" id="AE009441">
    <property type="protein sequence ID" value="AAL63698.1"/>
    <property type="molecule type" value="Genomic_DNA"/>
</dbReference>
<dbReference type="RefSeq" id="WP_011008169.1">
    <property type="nucleotide sequence ID" value="NC_003364.1"/>
</dbReference>
<dbReference type="SMR" id="Q8ZWK4"/>
<dbReference type="STRING" id="178306.PAE1748"/>
<dbReference type="EnsemblBacteria" id="AAL63698">
    <property type="protein sequence ID" value="AAL63698"/>
    <property type="gene ID" value="PAE1748"/>
</dbReference>
<dbReference type="GeneID" id="1465948"/>
<dbReference type="KEGG" id="pai:PAE1748"/>
<dbReference type="PATRIC" id="fig|178306.9.peg.1289"/>
<dbReference type="eggNOG" id="arCOG00401">
    <property type="taxonomic scope" value="Archaea"/>
</dbReference>
<dbReference type="HOGENOM" id="CLU_029833_0_0_2"/>
<dbReference type="InParanoid" id="Q8ZWK4"/>
<dbReference type="Proteomes" id="UP000002439">
    <property type="component" value="Chromosome"/>
</dbReference>
<dbReference type="GO" id="GO:0005737">
    <property type="term" value="C:cytoplasm"/>
    <property type="evidence" value="ECO:0007669"/>
    <property type="project" value="UniProtKB-SubCell"/>
</dbReference>
<dbReference type="GO" id="GO:0005524">
    <property type="term" value="F:ATP binding"/>
    <property type="evidence" value="ECO:0007669"/>
    <property type="project" value="UniProtKB-UniRule"/>
</dbReference>
<dbReference type="GO" id="GO:0004829">
    <property type="term" value="F:threonine-tRNA ligase activity"/>
    <property type="evidence" value="ECO:0000318"/>
    <property type="project" value="GO_Central"/>
</dbReference>
<dbReference type="GO" id="GO:0000049">
    <property type="term" value="F:tRNA binding"/>
    <property type="evidence" value="ECO:0007669"/>
    <property type="project" value="UniProtKB-KW"/>
</dbReference>
<dbReference type="GO" id="GO:0008270">
    <property type="term" value="F:zinc ion binding"/>
    <property type="evidence" value="ECO:0007669"/>
    <property type="project" value="InterPro"/>
</dbReference>
<dbReference type="GO" id="GO:0006435">
    <property type="term" value="P:threonyl-tRNA aminoacylation"/>
    <property type="evidence" value="ECO:0000318"/>
    <property type="project" value="GO_Central"/>
</dbReference>
<dbReference type="CDD" id="cd00860">
    <property type="entry name" value="ThrRS_anticodon"/>
    <property type="match status" value="1"/>
</dbReference>
<dbReference type="FunFam" id="3.30.930.10:FF:000076">
    <property type="entry name" value="Threonine--tRNA ligase"/>
    <property type="match status" value="1"/>
</dbReference>
<dbReference type="FunFam" id="3.40.50.800:FF:000001">
    <property type="entry name" value="Threonine--tRNA ligase"/>
    <property type="match status" value="1"/>
</dbReference>
<dbReference type="Gene3D" id="3.40.50.800">
    <property type="entry name" value="Anticodon-binding domain"/>
    <property type="match status" value="1"/>
</dbReference>
<dbReference type="Gene3D" id="3.30.930.10">
    <property type="entry name" value="Bira Bifunctional Protein, Domain 2"/>
    <property type="match status" value="1"/>
</dbReference>
<dbReference type="Gene3D" id="3.50.80.10">
    <property type="entry name" value="D-tyrosyl-tRNA(Tyr) deacylase"/>
    <property type="match status" value="1"/>
</dbReference>
<dbReference type="HAMAP" id="MF_00184">
    <property type="entry name" value="Thr_tRNA_synth"/>
    <property type="match status" value="1"/>
</dbReference>
<dbReference type="InterPro" id="IPR002314">
    <property type="entry name" value="aa-tRNA-synt_IIb"/>
</dbReference>
<dbReference type="InterPro" id="IPR006195">
    <property type="entry name" value="aa-tRNA-synth_II"/>
</dbReference>
<dbReference type="InterPro" id="IPR045864">
    <property type="entry name" value="aa-tRNA-synth_II/BPL/LPL"/>
</dbReference>
<dbReference type="InterPro" id="IPR004154">
    <property type="entry name" value="Anticodon-bd"/>
</dbReference>
<dbReference type="InterPro" id="IPR036621">
    <property type="entry name" value="Anticodon-bd_dom_sf"/>
</dbReference>
<dbReference type="InterPro" id="IPR023509">
    <property type="entry name" value="DTD-like_sf"/>
</dbReference>
<dbReference type="InterPro" id="IPR002320">
    <property type="entry name" value="Thr-tRNA-ligase_IIa"/>
</dbReference>
<dbReference type="InterPro" id="IPR015011">
    <property type="entry name" value="Threonyl-tRNA_syn_edit_dom_arc"/>
</dbReference>
<dbReference type="InterPro" id="IPR047246">
    <property type="entry name" value="ThrRS_anticodon"/>
</dbReference>
<dbReference type="NCBIfam" id="NF003068">
    <property type="entry name" value="PRK03991.1"/>
    <property type="match status" value="1"/>
</dbReference>
<dbReference type="PANTHER" id="PTHR11451:SF44">
    <property type="entry name" value="THREONINE--TRNA LIGASE, CHLOROPLASTIC_MITOCHONDRIAL 2"/>
    <property type="match status" value="1"/>
</dbReference>
<dbReference type="PANTHER" id="PTHR11451">
    <property type="entry name" value="THREONINE-TRNA LIGASE"/>
    <property type="match status" value="1"/>
</dbReference>
<dbReference type="Pfam" id="PF03129">
    <property type="entry name" value="HGTP_anticodon"/>
    <property type="match status" value="1"/>
</dbReference>
<dbReference type="Pfam" id="PF00587">
    <property type="entry name" value="tRNA-synt_2b"/>
    <property type="match status" value="1"/>
</dbReference>
<dbReference type="Pfam" id="PF08915">
    <property type="entry name" value="tRNA-Thr_ED"/>
    <property type="match status" value="1"/>
</dbReference>
<dbReference type="PRINTS" id="PR01047">
    <property type="entry name" value="TRNASYNTHTHR"/>
</dbReference>
<dbReference type="SUPFAM" id="SSF52954">
    <property type="entry name" value="Class II aaRS ABD-related"/>
    <property type="match status" value="1"/>
</dbReference>
<dbReference type="SUPFAM" id="SSF55681">
    <property type="entry name" value="Class II aaRS and biotin synthetases"/>
    <property type="match status" value="1"/>
</dbReference>
<dbReference type="PROSITE" id="PS50862">
    <property type="entry name" value="AA_TRNA_LIGASE_II"/>
    <property type="match status" value="1"/>
</dbReference>
<comment type="function">
    <text evidence="1">Catalyzes the attachment of threonine to tRNA(Thr) in a two-step reaction: L-threonine is first activated by ATP to form Thr-AMP and then transferred to the acceptor end of tRNA(Thr). Also edits incorrectly charged L-seryl-tRNA(Thr).</text>
</comment>
<comment type="catalytic activity">
    <reaction evidence="1">
        <text>tRNA(Thr) + L-threonine + ATP = L-threonyl-tRNA(Thr) + AMP + diphosphate + H(+)</text>
        <dbReference type="Rhea" id="RHEA:24624"/>
        <dbReference type="Rhea" id="RHEA-COMP:9670"/>
        <dbReference type="Rhea" id="RHEA-COMP:9704"/>
        <dbReference type="ChEBI" id="CHEBI:15378"/>
        <dbReference type="ChEBI" id="CHEBI:30616"/>
        <dbReference type="ChEBI" id="CHEBI:33019"/>
        <dbReference type="ChEBI" id="CHEBI:57926"/>
        <dbReference type="ChEBI" id="CHEBI:78442"/>
        <dbReference type="ChEBI" id="CHEBI:78534"/>
        <dbReference type="ChEBI" id="CHEBI:456215"/>
        <dbReference type="EC" id="6.1.1.3"/>
    </reaction>
</comment>
<comment type="cofactor">
    <cofactor evidence="1">
        <name>Zn(2+)</name>
        <dbReference type="ChEBI" id="CHEBI:29105"/>
    </cofactor>
    <text evidence="1">Binds 1 zinc ion per subunit.</text>
</comment>
<comment type="subunit">
    <text evidence="1">Homodimer.</text>
</comment>
<comment type="subcellular location">
    <subcellularLocation>
        <location evidence="1">Cytoplasm</location>
    </subcellularLocation>
</comment>
<comment type="domain">
    <text evidence="1">The N-terminal domain is an archaea-specific tRNA-editing domain that hydrolyzes incorrectly charged L-seryl-tRNA(Thr). Catalysis of tRNA editing is performed by the charged tRNA itself.</text>
</comment>
<comment type="similarity">
    <text evidence="1">Belongs to the class-II aminoacyl-tRNA synthetase family.</text>
</comment>
<feature type="chain" id="PRO_0000101108" description="Threonine--tRNA ligase">
    <location>
        <begin position="1"/>
        <end position="608"/>
    </location>
</feature>
<feature type="region of interest" description="Editing domain" evidence="1">
    <location>
        <begin position="1"/>
        <end position="143"/>
    </location>
</feature>
<feature type="region of interest" description="Catalytic" evidence="1">
    <location>
        <begin position="194"/>
        <end position="490"/>
    </location>
</feature>
<feature type="region of interest" description="Catalytic">
    <location>
        <begin position="195"/>
        <end position="490"/>
    </location>
</feature>
<feature type="binding site" evidence="1">
    <location>
        <position position="287"/>
    </location>
    <ligand>
        <name>Zn(2+)</name>
        <dbReference type="ChEBI" id="CHEBI:29105"/>
    </ligand>
</feature>
<feature type="binding site" evidence="1">
    <location>
        <position position="338"/>
    </location>
    <ligand>
        <name>Zn(2+)</name>
        <dbReference type="ChEBI" id="CHEBI:29105"/>
    </ligand>
</feature>
<feature type="binding site" evidence="1">
    <location>
        <position position="459"/>
    </location>
    <ligand>
        <name>Zn(2+)</name>
        <dbReference type="ChEBI" id="CHEBI:29105"/>
    </ligand>
</feature>